<keyword id="KW-0378">Hydrolase</keyword>
<keyword id="KW-1185">Reference proteome</keyword>
<organism>
    <name type="scientific">Encephalitozoon cuniculi (strain GB-M1)</name>
    <name type="common">Microsporidian parasite</name>
    <dbReference type="NCBI Taxonomy" id="284813"/>
    <lineage>
        <taxon>Eukaryota</taxon>
        <taxon>Fungi</taxon>
        <taxon>Fungi incertae sedis</taxon>
        <taxon>Microsporidia</taxon>
        <taxon>Unikaryonidae</taxon>
        <taxon>Encephalitozoon</taxon>
    </lineage>
</organism>
<proteinExistence type="evidence at protein level"/>
<protein>
    <recommendedName>
        <fullName>Probable trehalose-phosphatase</fullName>
        <ecNumber>3.1.3.12</ecNumber>
    </recommendedName>
    <alternativeName>
        <fullName>Trehalose-6-phosphate phosphatase</fullName>
        <shortName>TPP</shortName>
    </alternativeName>
</protein>
<dbReference type="EC" id="3.1.3.12"/>
<dbReference type="EMBL" id="AJ006825">
    <property type="protein sequence ID" value="CAA07262.1"/>
    <property type="molecule type" value="Genomic_DNA"/>
</dbReference>
<dbReference type="EMBL" id="AL391737">
    <property type="protein sequence ID" value="CAD24957.1"/>
    <property type="molecule type" value="Genomic_DNA"/>
</dbReference>
<dbReference type="RefSeq" id="NP_001402172.1">
    <property type="nucleotide sequence ID" value="NM_001415641.1"/>
</dbReference>
<dbReference type="RefSeq" id="XP_965922.1">
    <property type="nucleotide sequence ID" value="XM_960829.1"/>
</dbReference>
<dbReference type="SMR" id="Q8SSL0"/>
<dbReference type="FunCoup" id="Q8SSL0">
    <property type="interactions" value="11"/>
</dbReference>
<dbReference type="STRING" id="284813.Q8SSL0"/>
<dbReference type="CAZy" id="GT20">
    <property type="family name" value="Glycosyltransferase Family 20"/>
</dbReference>
<dbReference type="GeneID" id="860263"/>
<dbReference type="VEuPathDB" id="MicrosporidiaDB:ECU01_0870"/>
<dbReference type="HOGENOM" id="CLU_002351_3_3_1"/>
<dbReference type="InParanoid" id="Q8SSL0"/>
<dbReference type="OMA" id="GWEFSWD"/>
<dbReference type="OrthoDB" id="755951at2759"/>
<dbReference type="Proteomes" id="UP000000819">
    <property type="component" value="Chromosome I"/>
</dbReference>
<dbReference type="GO" id="GO:0003825">
    <property type="term" value="F:alpha,alpha-trehalose-phosphate synthase (UDP-forming) activity"/>
    <property type="evidence" value="ECO:0007669"/>
    <property type="project" value="TreeGrafter"/>
</dbReference>
<dbReference type="GO" id="GO:0004805">
    <property type="term" value="F:trehalose-phosphatase activity"/>
    <property type="evidence" value="ECO:0007669"/>
    <property type="project" value="UniProtKB-EC"/>
</dbReference>
<dbReference type="GO" id="GO:0005992">
    <property type="term" value="P:trehalose biosynthetic process"/>
    <property type="evidence" value="ECO:0007669"/>
    <property type="project" value="InterPro"/>
</dbReference>
<dbReference type="CDD" id="cd01627">
    <property type="entry name" value="HAD_TPP"/>
    <property type="match status" value="1"/>
</dbReference>
<dbReference type="Gene3D" id="3.40.50.2000">
    <property type="entry name" value="Glycogen Phosphorylase B"/>
    <property type="match status" value="1"/>
</dbReference>
<dbReference type="Gene3D" id="3.40.50.1000">
    <property type="entry name" value="HAD superfamily/HAD-like"/>
    <property type="match status" value="1"/>
</dbReference>
<dbReference type="Gene3D" id="3.30.70.1020">
    <property type="entry name" value="Trehalose-6-phosphate phosphatase related protein, domain 2"/>
    <property type="match status" value="1"/>
</dbReference>
<dbReference type="InterPro" id="IPR001830">
    <property type="entry name" value="Glyco_trans_20"/>
</dbReference>
<dbReference type="InterPro" id="IPR036412">
    <property type="entry name" value="HAD-like_sf"/>
</dbReference>
<dbReference type="InterPro" id="IPR023214">
    <property type="entry name" value="HAD_sf"/>
</dbReference>
<dbReference type="InterPro" id="IPR003337">
    <property type="entry name" value="Trehalose_PPase"/>
</dbReference>
<dbReference type="NCBIfam" id="TIGR00685">
    <property type="entry name" value="T6PP"/>
    <property type="match status" value="1"/>
</dbReference>
<dbReference type="PANTHER" id="PTHR10788:SF106">
    <property type="entry name" value="BCDNA.GH08860"/>
    <property type="match status" value="1"/>
</dbReference>
<dbReference type="PANTHER" id="PTHR10788">
    <property type="entry name" value="TREHALOSE-6-PHOSPHATE SYNTHASE"/>
    <property type="match status" value="1"/>
</dbReference>
<dbReference type="Pfam" id="PF00982">
    <property type="entry name" value="Glyco_transf_20"/>
    <property type="match status" value="1"/>
</dbReference>
<dbReference type="Pfam" id="PF02358">
    <property type="entry name" value="Trehalose_PPase"/>
    <property type="match status" value="1"/>
</dbReference>
<dbReference type="SUPFAM" id="SSF56784">
    <property type="entry name" value="HAD-like"/>
    <property type="match status" value="1"/>
</dbReference>
<dbReference type="SUPFAM" id="SSF53756">
    <property type="entry name" value="UDP-Glycosyltransferase/glycogen phosphorylase"/>
    <property type="match status" value="1"/>
</dbReference>
<reference key="1">
    <citation type="submission" date="1998-06" db="EMBL/GenBank/DDBJ databases">
        <title>Putative trehalose 6-phosphate phosphatase from the chromosome I of Encephalitozoon cuniculi (Microspora).</title>
        <authorList>
            <person name="Duffieux F."/>
            <person name="Peyret P."/>
            <person name="Roe B.A."/>
            <person name="Vivares C.P."/>
        </authorList>
    </citation>
    <scope>NUCLEOTIDE SEQUENCE [GENOMIC DNA]</scope>
</reference>
<reference key="2">
    <citation type="journal article" date="2001" name="Genome Res.">
        <title>Sequence and analysis of chromosome I of the amitochondriate intracellular parasite Encephalitozoon cuniculi (Microspora).</title>
        <authorList>
            <person name="Peyret P."/>
            <person name="Katinka M.D."/>
            <person name="Duprat S."/>
            <person name="Duffieux F."/>
            <person name="Barbe V."/>
            <person name="Barbazanges M."/>
            <person name="Weissenbach J."/>
            <person name="Saurin W."/>
            <person name="Vivares C.P."/>
        </authorList>
    </citation>
    <scope>NUCLEOTIDE SEQUENCE [LARGE SCALE GENOMIC DNA]</scope>
    <source>
        <strain>GB-M1</strain>
    </source>
</reference>
<reference key="3">
    <citation type="journal article" date="2001" name="Nature">
        <title>Genome sequence and gene compaction of the eukaryote parasite Encephalitozoon cuniculi.</title>
        <authorList>
            <person name="Katinka M.D."/>
            <person name="Duprat S."/>
            <person name="Cornillot E."/>
            <person name="Metenier G."/>
            <person name="Thomarat F."/>
            <person name="Prensier G."/>
            <person name="Barbe V."/>
            <person name="Peyretaillade E."/>
            <person name="Brottier P."/>
            <person name="Wincker P."/>
            <person name="Delbac F."/>
            <person name="El Alaoui H."/>
            <person name="Peyret P."/>
            <person name="Saurin W."/>
            <person name="Gouy M."/>
            <person name="Weissenbach J."/>
            <person name="Vivares C.P."/>
        </authorList>
    </citation>
    <scope>NUCLEOTIDE SEQUENCE [LARGE SCALE GENOMIC DNA]</scope>
    <source>
        <strain>GB-M1</strain>
    </source>
</reference>
<reference key="4">
    <citation type="journal article" date="2006" name="Proteomics">
        <title>Proteomic analysis of the eukaryotic parasite Encephalitozoon cuniculi (microsporidia): a reference map for proteins expressed in late sporogonial stages.</title>
        <authorList>
            <person name="Brosson D."/>
            <person name="Kuhn L."/>
            <person name="Delbac F."/>
            <person name="Garin J."/>
            <person name="Vivares C.P."/>
            <person name="Texier C."/>
        </authorList>
    </citation>
    <scope>IDENTIFICATION BY MASS SPECTROMETRY [LARGE SCALE ANALYSIS]</scope>
    <scope>DEVELOPMENTAL STAGE</scope>
</reference>
<gene>
    <name type="ordered locus">ECU01_0870</name>
</gene>
<sequence length="718" mass="82064">MKIIVAAEELPICASRMEPSEAIKNWISTPLKKIPHPDKASKIQIEFGDRSKESLHLFAKPHFMVPDMLDDDEMFFVGAPGFYSPEEFSDEDCRRIEESMKAYRCYPIFQKRVKYSKMIEEILGKNTYEFVQSNFDHANMFARYKEYNTRWHEKIMEIYEEGDVVWVMDHSLFLLPGMLGNSIPVGMSASVPFSSLLKCIPFWEQIFSSILCCRYIEFNESSSKESFDLLVSQKTGFCMGDPGYKDIREPLTCVGKKGIDKDVLLKMSSEVHEFEGLGKGKVILLPSDSQTHLLGVEAYLSRYGKEITVLFLRTRVLNGDSDKQAEVMRLREYLEINYKVLSREFTPASDPEFISMLKRCDLCHCPEVADVCSLFGIPVVRNNPYDFFDIADEINENLMQRGEGSKEGSSEVIGKMEWKKRFMTSLLSISGMEYDVDLEPKEPRIRSSLSMDQTGHKKVDAKKKPGIRKKNREKEEAVEIILNNKEDANAARIVNDFKKSKARTLVMDYDGTLTNIVARPPMAAPTQEIKDLLIRLGKICRVVISTGRSVEDCDKFFPKEIEVFAEHGACHRIDGKWKEGGTFPQKDLAWRIGQFFLARTPGSELERKKTGYAFHFRNVSPLIGVKQARALFELLMRVCKDYVKKGNHVIEVRSSKKSCAMEKIEEGFVLCAGDDVADEDMFDVCKGYTIKVGDQSTSAAYRVKDPENFRMLLGRLLE</sequence>
<name>TPP_ENCCU</name>
<comment type="catalytic activity">
    <reaction>
        <text>alpha,alpha-trehalose 6-phosphate + H2O = alpha,alpha-trehalose + phosphate</text>
        <dbReference type="Rhea" id="RHEA:23420"/>
        <dbReference type="ChEBI" id="CHEBI:15377"/>
        <dbReference type="ChEBI" id="CHEBI:16551"/>
        <dbReference type="ChEBI" id="CHEBI:43474"/>
        <dbReference type="ChEBI" id="CHEBI:58429"/>
        <dbReference type="EC" id="3.1.3.12"/>
    </reaction>
</comment>
<comment type="developmental stage">
    <text evidence="2">Expressed in late sporogonial stages.</text>
</comment>
<comment type="similarity">
    <text evidence="3">In the N-terminal section; belongs to the glycosyltransferase 20 family.</text>
</comment>
<comment type="similarity">
    <text evidence="3">In the C-terminal section; belongs to the trehalose phosphatase family.</text>
</comment>
<evidence type="ECO:0000256" key="1">
    <source>
        <dbReference type="SAM" id="MobiDB-lite"/>
    </source>
</evidence>
<evidence type="ECO:0000269" key="2">
    <source>
    </source>
</evidence>
<evidence type="ECO:0000305" key="3"/>
<accession>Q8SSL0</accession>
<accession>O96721</accession>
<feature type="chain" id="PRO_0000122507" description="Probable trehalose-phosphatase">
    <location>
        <begin position="1"/>
        <end position="718"/>
    </location>
</feature>
<feature type="region of interest" description="Disordered" evidence="1">
    <location>
        <begin position="449"/>
        <end position="470"/>
    </location>
</feature>
<feature type="compositionally biased region" description="Basic residues" evidence="1">
    <location>
        <begin position="459"/>
        <end position="470"/>
    </location>
</feature>
<feature type="sequence conflict" description="In Ref. 1; CAA07262." evidence="3" ref="1">
    <original>R</original>
    <variation>K</variation>
    <location>
        <position position="421"/>
    </location>
</feature>